<protein>
    <recommendedName>
        <fullName evidence="1">DNA repair protein RecO</fullName>
    </recommendedName>
    <alternativeName>
        <fullName evidence="1">Recombination protein O</fullName>
    </alternativeName>
</protein>
<dbReference type="EMBL" id="AE009948">
    <property type="protein sequence ID" value="AAM98928.1"/>
    <property type="molecule type" value="Genomic_DNA"/>
</dbReference>
<dbReference type="RefSeq" id="NP_687056.1">
    <property type="nucleotide sequence ID" value="NC_004116.1"/>
</dbReference>
<dbReference type="RefSeq" id="WP_001266275.1">
    <property type="nucleotide sequence ID" value="NC_004116.1"/>
</dbReference>
<dbReference type="SMR" id="Q8E2G8"/>
<dbReference type="STRING" id="208435.SAG0020"/>
<dbReference type="KEGG" id="sag:SAG0020"/>
<dbReference type="PATRIC" id="fig|208435.3.peg.19"/>
<dbReference type="HOGENOM" id="CLU_066632_4_0_9"/>
<dbReference type="OrthoDB" id="9797083at2"/>
<dbReference type="Proteomes" id="UP000000821">
    <property type="component" value="Chromosome"/>
</dbReference>
<dbReference type="GO" id="GO:0043590">
    <property type="term" value="C:bacterial nucleoid"/>
    <property type="evidence" value="ECO:0007669"/>
    <property type="project" value="TreeGrafter"/>
</dbReference>
<dbReference type="GO" id="GO:0006310">
    <property type="term" value="P:DNA recombination"/>
    <property type="evidence" value="ECO:0007669"/>
    <property type="project" value="UniProtKB-UniRule"/>
</dbReference>
<dbReference type="GO" id="GO:0006302">
    <property type="term" value="P:double-strand break repair"/>
    <property type="evidence" value="ECO:0007669"/>
    <property type="project" value="TreeGrafter"/>
</dbReference>
<dbReference type="Gene3D" id="2.40.50.140">
    <property type="entry name" value="Nucleic acid-binding proteins"/>
    <property type="match status" value="1"/>
</dbReference>
<dbReference type="Gene3D" id="1.20.1440.120">
    <property type="entry name" value="Recombination protein O, C-terminal domain"/>
    <property type="match status" value="1"/>
</dbReference>
<dbReference type="HAMAP" id="MF_00201">
    <property type="entry name" value="RecO"/>
    <property type="match status" value="1"/>
</dbReference>
<dbReference type="InterPro" id="IPR037278">
    <property type="entry name" value="ARFGAP/RecO"/>
</dbReference>
<dbReference type="InterPro" id="IPR022572">
    <property type="entry name" value="DNA_rep/recomb_RecO_N"/>
</dbReference>
<dbReference type="InterPro" id="IPR012340">
    <property type="entry name" value="NA-bd_OB-fold"/>
</dbReference>
<dbReference type="InterPro" id="IPR003717">
    <property type="entry name" value="RecO"/>
</dbReference>
<dbReference type="InterPro" id="IPR042242">
    <property type="entry name" value="RecO_C"/>
</dbReference>
<dbReference type="NCBIfam" id="TIGR00613">
    <property type="entry name" value="reco"/>
    <property type="match status" value="1"/>
</dbReference>
<dbReference type="PANTHER" id="PTHR33991">
    <property type="entry name" value="DNA REPAIR PROTEIN RECO"/>
    <property type="match status" value="1"/>
</dbReference>
<dbReference type="PANTHER" id="PTHR33991:SF1">
    <property type="entry name" value="DNA REPAIR PROTEIN RECO"/>
    <property type="match status" value="1"/>
</dbReference>
<dbReference type="Pfam" id="PF02565">
    <property type="entry name" value="RecO_C"/>
    <property type="match status" value="1"/>
</dbReference>
<dbReference type="Pfam" id="PF11967">
    <property type="entry name" value="RecO_N"/>
    <property type="match status" value="1"/>
</dbReference>
<dbReference type="SUPFAM" id="SSF57863">
    <property type="entry name" value="ArfGap/RecO-like zinc finger"/>
    <property type="match status" value="1"/>
</dbReference>
<dbReference type="SUPFAM" id="SSF50249">
    <property type="entry name" value="Nucleic acid-binding proteins"/>
    <property type="match status" value="1"/>
</dbReference>
<gene>
    <name evidence="1" type="primary">recO</name>
    <name type="ordered locus">SAG0020</name>
</gene>
<comment type="function">
    <text evidence="1">Involved in DNA repair and RecF pathway recombination.</text>
</comment>
<comment type="similarity">
    <text evidence="1">Belongs to the RecO family.</text>
</comment>
<feature type="chain" id="PRO_0000205005" description="DNA repair protein RecO">
    <location>
        <begin position="1"/>
        <end position="253"/>
    </location>
</feature>
<keyword id="KW-0227">DNA damage</keyword>
<keyword id="KW-0233">DNA recombination</keyword>
<keyword id="KW-0234">DNA repair</keyword>
<keyword id="KW-1185">Reference proteome</keyword>
<evidence type="ECO:0000255" key="1">
    <source>
        <dbReference type="HAMAP-Rule" id="MF_00201"/>
    </source>
</evidence>
<reference key="1">
    <citation type="journal article" date="2002" name="Proc. Natl. Acad. Sci. U.S.A.">
        <title>Complete genome sequence and comparative genomic analysis of an emerging human pathogen, serotype V Streptococcus agalactiae.</title>
        <authorList>
            <person name="Tettelin H."/>
            <person name="Masignani V."/>
            <person name="Cieslewicz M.J."/>
            <person name="Eisen J.A."/>
            <person name="Peterson S.N."/>
            <person name="Wessels M.R."/>
            <person name="Paulsen I.T."/>
            <person name="Nelson K.E."/>
            <person name="Margarit I."/>
            <person name="Read T.D."/>
            <person name="Madoff L.C."/>
            <person name="Wolf A.M."/>
            <person name="Beanan M.J."/>
            <person name="Brinkac L.M."/>
            <person name="Daugherty S.C."/>
            <person name="DeBoy R.T."/>
            <person name="Durkin A.S."/>
            <person name="Kolonay J.F."/>
            <person name="Madupu R."/>
            <person name="Lewis M.R."/>
            <person name="Radune D."/>
            <person name="Fedorova N.B."/>
            <person name="Scanlan D."/>
            <person name="Khouri H.M."/>
            <person name="Mulligan S."/>
            <person name="Carty H.A."/>
            <person name="Cline R.T."/>
            <person name="Van Aken S.E."/>
            <person name="Gill J."/>
            <person name="Scarselli M."/>
            <person name="Mora M."/>
            <person name="Iacobini E.T."/>
            <person name="Brettoni C."/>
            <person name="Galli G."/>
            <person name="Mariani M."/>
            <person name="Vegni F."/>
            <person name="Maione D."/>
            <person name="Rinaudo D."/>
            <person name="Rappuoli R."/>
            <person name="Telford J.L."/>
            <person name="Kasper D.L."/>
            <person name="Grandi G."/>
            <person name="Fraser C.M."/>
        </authorList>
    </citation>
    <scope>NUCLEOTIDE SEQUENCE [LARGE SCALE GENOMIC DNA]</scope>
    <source>
        <strain>ATCC BAA-611 / 2603 V/R</strain>
    </source>
</reference>
<proteinExistence type="inferred from homology"/>
<name>RECO_STRA5</name>
<sequence>MRVSQTYGLVLYNRNYREDDKLVKIFTETEGKRMFFVKHASKSKFNAVLQPLTIAHFILKINDNGLSYIDDYKEVLAFQETNSDLFKLSYASYITSLADVAISDNVADAQLFIFLKKTLELIEDGLDYEILTNIFEVQLLERFGVALNFHDCVFCHRVGLPFDFSHKYSGLLCPNHYYKDERRNHLDPNMLYLINRFQSIQFDDLQTISVKPEMKLKIRQFLDMIYDEYVGIHLKSKKFIDDLSSWGSIMKSD</sequence>
<organism>
    <name type="scientific">Streptococcus agalactiae serotype V (strain ATCC BAA-611 / 2603 V/R)</name>
    <dbReference type="NCBI Taxonomy" id="208435"/>
    <lineage>
        <taxon>Bacteria</taxon>
        <taxon>Bacillati</taxon>
        <taxon>Bacillota</taxon>
        <taxon>Bacilli</taxon>
        <taxon>Lactobacillales</taxon>
        <taxon>Streptococcaceae</taxon>
        <taxon>Streptococcus</taxon>
    </lineage>
</organism>
<accession>Q8E2G8</accession>